<name>TKN1_PSEGU</name>
<accession>P42986</accession>
<organism>
    <name type="scientific">Pseudophryne guentheri</name>
    <name type="common">Guenther's toadlet</name>
    <dbReference type="NCBI Taxonomy" id="30349"/>
    <lineage>
        <taxon>Eukaryota</taxon>
        <taxon>Metazoa</taxon>
        <taxon>Chordata</taxon>
        <taxon>Craniata</taxon>
        <taxon>Vertebrata</taxon>
        <taxon>Euteleostomi</taxon>
        <taxon>Amphibia</taxon>
        <taxon>Batrachia</taxon>
        <taxon>Anura</taxon>
        <taxon>Neobatrachia</taxon>
        <taxon>Myobatrachoidea</taxon>
        <taxon>Myobatrachidae</taxon>
        <taxon>Myobatrachinae</taxon>
        <taxon>Pseudophryne</taxon>
    </lineage>
</organism>
<proteinExistence type="evidence at protein level"/>
<protein>
    <recommendedName>
        <fullName>Kassinin-like peptide K-I</fullName>
    </recommendedName>
    <alternativeName>
        <fullName>PG-KI</fullName>
    </alternativeName>
</protein>
<comment type="function">
    <text>Tachykinins are active peptides which excite neurons, evoke behavioral responses, are potent vasodilators and secretagogues, and contract (directly or indirectly) many smooth muscles.</text>
</comment>
<comment type="subcellular location">
    <subcellularLocation>
        <location>Secreted</location>
    </subcellularLocation>
</comment>
<comment type="tissue specificity">
    <text>Expressed by the skin glands.</text>
</comment>
<comment type="similarity">
    <text evidence="2">Belongs to the tachykinin family.</text>
</comment>
<feature type="peptide" id="PRO_0000044400" description="Kassinin-like peptide K-I">
    <location>
        <begin position="1"/>
        <end position="11"/>
    </location>
</feature>
<feature type="modified residue" description="Pyrrolidone carboxylic acid" evidence="1">
    <location>
        <position position="1"/>
    </location>
</feature>
<feature type="modified residue" description="Methionine amide" evidence="1">
    <location>
        <position position="11"/>
    </location>
</feature>
<sequence length="11" mass="1269">QPHPDEFVGLM</sequence>
<keyword id="KW-0027">Amidation</keyword>
<keyword id="KW-0878">Amphibian defense peptide</keyword>
<keyword id="KW-0903">Direct protein sequencing</keyword>
<keyword id="KW-0527">Neuropeptide</keyword>
<keyword id="KW-0873">Pyrrolidone carboxylic acid</keyword>
<keyword id="KW-0964">Secreted</keyword>
<dbReference type="PIR" id="B60409">
    <property type="entry name" value="B60409"/>
</dbReference>
<dbReference type="GO" id="GO:0005576">
    <property type="term" value="C:extracellular region"/>
    <property type="evidence" value="ECO:0007669"/>
    <property type="project" value="UniProtKB-SubCell"/>
</dbReference>
<dbReference type="GO" id="GO:0006952">
    <property type="term" value="P:defense response"/>
    <property type="evidence" value="ECO:0007669"/>
    <property type="project" value="UniProtKB-KW"/>
</dbReference>
<dbReference type="GO" id="GO:0007218">
    <property type="term" value="P:neuropeptide signaling pathway"/>
    <property type="evidence" value="ECO:0007669"/>
    <property type="project" value="UniProtKB-KW"/>
</dbReference>
<dbReference type="GO" id="GO:0007217">
    <property type="term" value="P:tachykinin receptor signaling pathway"/>
    <property type="evidence" value="ECO:0007669"/>
    <property type="project" value="InterPro"/>
</dbReference>
<dbReference type="InterPro" id="IPR013055">
    <property type="entry name" value="Tachy_Neuro_lke_CS"/>
</dbReference>
<dbReference type="InterPro" id="IPR008215">
    <property type="entry name" value="Tachykinin_dom"/>
</dbReference>
<dbReference type="Pfam" id="PF02202">
    <property type="entry name" value="Tachykinin"/>
    <property type="match status" value="1"/>
</dbReference>
<dbReference type="PROSITE" id="PS00267">
    <property type="entry name" value="TACHYKININ"/>
    <property type="match status" value="1"/>
</dbReference>
<evidence type="ECO:0000269" key="1">
    <source>
    </source>
</evidence>
<evidence type="ECO:0000305" key="2"/>
<reference key="1">
    <citation type="journal article" date="1990" name="Peptides">
        <title>Six novel tachykinin- and bombesin-related peptides from the skin of the Australian frog Pseudophryne guntheri.</title>
        <authorList>
            <person name="Simmaco M."/>
            <person name="Severini C."/>
            <person name="de Biase D."/>
            <person name="Barra D."/>
            <person name="Bossa F."/>
            <person name="Roberts J.D."/>
            <person name="Melchiorri P."/>
            <person name="Erspamer V."/>
        </authorList>
    </citation>
    <scope>PROTEIN SEQUENCE</scope>
    <scope>PYROGLUTAMATE FORMATION AT GLN-1</scope>
    <scope>AMIDATION AT MET-11</scope>
    <source>
        <tissue>Skin secretion</tissue>
    </source>
</reference>